<comment type="function">
    <text evidence="1">Repressor involved in the biosynthesis of the osmoprotectant glycine betaine. It represses transcription of the choline transporter BetT and the genes of BetAB involved in the synthesis of glycine betaine (By similarity).</text>
</comment>
<comment type="pathway">
    <text>Amine and polyamine biosynthesis; betaine biosynthesis via choline pathway [regulation].</text>
</comment>
<evidence type="ECO:0000250" key="1"/>
<evidence type="ECO:0000255" key="2">
    <source>
        <dbReference type="HAMAP-Rule" id="MF_00768"/>
    </source>
</evidence>
<protein>
    <recommendedName>
        <fullName evidence="2">HTH-type transcriptional regulator BetI</fullName>
    </recommendedName>
</protein>
<sequence length="195" mass="21513">MPKLGMREIRRAQLIDATLHTIDQTGLAGATLASVAQRASISTGIVSHYFGDKDGLLEATMRHVLRDLWQATSRRRRAAKADPRSKLRAVVAANFDAEQTSGPVMKTWLAFWSESMHKPPLRRLQYVNTRRLNSNLCADFSKAMPRAAARRAASGLAALIDGLWLRGALSGEPFDTKAALRVANDYIDLVLASRE</sequence>
<proteinExistence type="inferred from homology"/>
<accession>B2TCK0</accession>
<organism>
    <name type="scientific">Paraburkholderia phytofirmans (strain DSM 17436 / LMG 22146 / PsJN)</name>
    <name type="common">Burkholderia phytofirmans</name>
    <dbReference type="NCBI Taxonomy" id="398527"/>
    <lineage>
        <taxon>Bacteria</taxon>
        <taxon>Pseudomonadati</taxon>
        <taxon>Pseudomonadota</taxon>
        <taxon>Betaproteobacteria</taxon>
        <taxon>Burkholderiales</taxon>
        <taxon>Burkholderiaceae</taxon>
        <taxon>Paraburkholderia</taxon>
    </lineage>
</organism>
<name>BETI_PARPJ</name>
<feature type="chain" id="PRO_1000133657" description="HTH-type transcriptional regulator BetI">
    <location>
        <begin position="1"/>
        <end position="195"/>
    </location>
</feature>
<feature type="domain" description="HTH tetR-type" evidence="2">
    <location>
        <begin position="8"/>
        <end position="68"/>
    </location>
</feature>
<feature type="DNA-binding region" description="H-T-H motif" evidence="2">
    <location>
        <begin position="31"/>
        <end position="50"/>
    </location>
</feature>
<dbReference type="EMBL" id="CP001053">
    <property type="protein sequence ID" value="ACD19424.1"/>
    <property type="molecule type" value="Genomic_DNA"/>
</dbReference>
<dbReference type="RefSeq" id="WP_012426935.1">
    <property type="nucleotide sequence ID" value="NC_010676.1"/>
</dbReference>
<dbReference type="SMR" id="B2TCK0"/>
<dbReference type="STRING" id="398527.Bphyt_5060"/>
<dbReference type="KEGG" id="bpy:Bphyt_5060"/>
<dbReference type="eggNOG" id="COG1309">
    <property type="taxonomic scope" value="Bacteria"/>
</dbReference>
<dbReference type="HOGENOM" id="CLU_069356_15_4_4"/>
<dbReference type="OrthoDB" id="7618612at2"/>
<dbReference type="UniPathway" id="UPA00529"/>
<dbReference type="Proteomes" id="UP000001739">
    <property type="component" value="Chromosome 2"/>
</dbReference>
<dbReference type="GO" id="GO:0003700">
    <property type="term" value="F:DNA-binding transcription factor activity"/>
    <property type="evidence" value="ECO:0007669"/>
    <property type="project" value="UniProtKB-UniRule"/>
</dbReference>
<dbReference type="GO" id="GO:0000976">
    <property type="term" value="F:transcription cis-regulatory region binding"/>
    <property type="evidence" value="ECO:0007669"/>
    <property type="project" value="TreeGrafter"/>
</dbReference>
<dbReference type="GO" id="GO:0019285">
    <property type="term" value="P:glycine betaine biosynthetic process from choline"/>
    <property type="evidence" value="ECO:0007669"/>
    <property type="project" value="UniProtKB-UniRule"/>
</dbReference>
<dbReference type="GO" id="GO:0045892">
    <property type="term" value="P:negative regulation of DNA-templated transcription"/>
    <property type="evidence" value="ECO:0007669"/>
    <property type="project" value="UniProtKB-UniRule"/>
</dbReference>
<dbReference type="Gene3D" id="1.10.357.10">
    <property type="entry name" value="Tetracycline Repressor, domain 2"/>
    <property type="match status" value="1"/>
</dbReference>
<dbReference type="HAMAP" id="MF_00768">
    <property type="entry name" value="HTH_type_BetI"/>
    <property type="match status" value="1"/>
</dbReference>
<dbReference type="InterPro" id="IPR039538">
    <property type="entry name" value="BetI_C"/>
</dbReference>
<dbReference type="InterPro" id="IPR023772">
    <property type="entry name" value="DNA-bd_HTH_TetR-type_CS"/>
</dbReference>
<dbReference type="InterPro" id="IPR009057">
    <property type="entry name" value="Homeodomain-like_sf"/>
</dbReference>
<dbReference type="InterPro" id="IPR050109">
    <property type="entry name" value="HTH-type_TetR-like_transc_reg"/>
</dbReference>
<dbReference type="InterPro" id="IPR001647">
    <property type="entry name" value="HTH_TetR"/>
</dbReference>
<dbReference type="InterPro" id="IPR036271">
    <property type="entry name" value="Tet_transcr_reg_TetR-rel_C_sf"/>
</dbReference>
<dbReference type="InterPro" id="IPR017757">
    <property type="entry name" value="Tscrpt_rep_BetI"/>
</dbReference>
<dbReference type="NCBIfam" id="TIGR03384">
    <property type="entry name" value="betaine_BetI"/>
    <property type="match status" value="1"/>
</dbReference>
<dbReference type="NCBIfam" id="NF001978">
    <property type="entry name" value="PRK00767.1"/>
    <property type="match status" value="1"/>
</dbReference>
<dbReference type="PANTHER" id="PTHR30055:SF234">
    <property type="entry name" value="HTH-TYPE TRANSCRIPTIONAL REGULATOR BETI"/>
    <property type="match status" value="1"/>
</dbReference>
<dbReference type="PANTHER" id="PTHR30055">
    <property type="entry name" value="HTH-TYPE TRANSCRIPTIONAL REGULATOR RUTR"/>
    <property type="match status" value="1"/>
</dbReference>
<dbReference type="Pfam" id="PF13977">
    <property type="entry name" value="TetR_C_6"/>
    <property type="match status" value="1"/>
</dbReference>
<dbReference type="Pfam" id="PF00440">
    <property type="entry name" value="TetR_N"/>
    <property type="match status" value="1"/>
</dbReference>
<dbReference type="SUPFAM" id="SSF46689">
    <property type="entry name" value="Homeodomain-like"/>
    <property type="match status" value="1"/>
</dbReference>
<dbReference type="SUPFAM" id="SSF48498">
    <property type="entry name" value="Tetracyclin repressor-like, C-terminal domain"/>
    <property type="match status" value="1"/>
</dbReference>
<dbReference type="PROSITE" id="PS01081">
    <property type="entry name" value="HTH_TETR_1"/>
    <property type="match status" value="1"/>
</dbReference>
<dbReference type="PROSITE" id="PS50977">
    <property type="entry name" value="HTH_TETR_2"/>
    <property type="match status" value="1"/>
</dbReference>
<keyword id="KW-0238">DNA-binding</keyword>
<keyword id="KW-0678">Repressor</keyword>
<keyword id="KW-0804">Transcription</keyword>
<keyword id="KW-0805">Transcription regulation</keyword>
<gene>
    <name evidence="2" type="primary">betI</name>
    <name type="ordered locus">Bphyt_5060</name>
</gene>
<reference key="1">
    <citation type="journal article" date="2011" name="J. Bacteriol.">
        <title>Complete genome sequence of the plant growth-promoting endophyte Burkholderia phytofirmans strain PsJN.</title>
        <authorList>
            <person name="Weilharter A."/>
            <person name="Mitter B."/>
            <person name="Shin M.V."/>
            <person name="Chain P.S."/>
            <person name="Nowak J."/>
            <person name="Sessitsch A."/>
        </authorList>
    </citation>
    <scope>NUCLEOTIDE SEQUENCE [LARGE SCALE GENOMIC DNA]</scope>
    <source>
        <strain>DSM 17436 / LMG 22146 / PsJN</strain>
    </source>
</reference>